<accession>B0BBD7</accession>
<organism>
    <name type="scientific">Chlamydia trachomatis serovar L2b (strain UCH-1/proctitis)</name>
    <dbReference type="NCBI Taxonomy" id="471473"/>
    <lineage>
        <taxon>Bacteria</taxon>
        <taxon>Pseudomonadati</taxon>
        <taxon>Chlamydiota</taxon>
        <taxon>Chlamydiia</taxon>
        <taxon>Chlamydiales</taxon>
        <taxon>Chlamydiaceae</taxon>
        <taxon>Chlamydia/Chlamydophila group</taxon>
        <taxon>Chlamydia</taxon>
    </lineage>
</organism>
<dbReference type="EMBL" id="AM884177">
    <property type="protein sequence ID" value="CAP06799.1"/>
    <property type="molecule type" value="Genomic_DNA"/>
</dbReference>
<dbReference type="RefSeq" id="WP_009873598.1">
    <property type="nucleotide sequence ID" value="NC_010280.2"/>
</dbReference>
<dbReference type="SMR" id="B0BBD7"/>
<dbReference type="KEGG" id="ctl:CTLon_0401"/>
<dbReference type="HOGENOM" id="CLU_190949_1_1_0"/>
<dbReference type="Proteomes" id="UP001154401">
    <property type="component" value="Chromosome"/>
</dbReference>
<dbReference type="GO" id="GO:0022625">
    <property type="term" value="C:cytosolic large ribosomal subunit"/>
    <property type="evidence" value="ECO:0007669"/>
    <property type="project" value="TreeGrafter"/>
</dbReference>
<dbReference type="GO" id="GO:0003735">
    <property type="term" value="F:structural constituent of ribosome"/>
    <property type="evidence" value="ECO:0007669"/>
    <property type="project" value="InterPro"/>
</dbReference>
<dbReference type="GO" id="GO:0006412">
    <property type="term" value="P:translation"/>
    <property type="evidence" value="ECO:0007669"/>
    <property type="project" value="UniProtKB-UniRule"/>
</dbReference>
<dbReference type="FunFam" id="2.20.28.120:FF:000009">
    <property type="entry name" value="50S ribosomal protein L33"/>
    <property type="match status" value="1"/>
</dbReference>
<dbReference type="Gene3D" id="2.20.28.120">
    <property type="entry name" value="Ribosomal protein L33"/>
    <property type="match status" value="1"/>
</dbReference>
<dbReference type="HAMAP" id="MF_00294">
    <property type="entry name" value="Ribosomal_bL33"/>
    <property type="match status" value="1"/>
</dbReference>
<dbReference type="InterPro" id="IPR001705">
    <property type="entry name" value="Ribosomal_bL33"/>
</dbReference>
<dbReference type="InterPro" id="IPR018264">
    <property type="entry name" value="Ribosomal_bL33_CS"/>
</dbReference>
<dbReference type="InterPro" id="IPR038584">
    <property type="entry name" value="Ribosomal_bL33_sf"/>
</dbReference>
<dbReference type="InterPro" id="IPR011332">
    <property type="entry name" value="Ribosomal_zn-bd"/>
</dbReference>
<dbReference type="NCBIfam" id="NF001860">
    <property type="entry name" value="PRK00595.1"/>
    <property type="match status" value="1"/>
</dbReference>
<dbReference type="NCBIfam" id="TIGR01023">
    <property type="entry name" value="rpmG_bact"/>
    <property type="match status" value="1"/>
</dbReference>
<dbReference type="PANTHER" id="PTHR15238">
    <property type="entry name" value="54S RIBOSOMAL PROTEIN L39, MITOCHONDRIAL"/>
    <property type="match status" value="1"/>
</dbReference>
<dbReference type="PANTHER" id="PTHR15238:SF1">
    <property type="entry name" value="LARGE RIBOSOMAL SUBUNIT PROTEIN BL33M"/>
    <property type="match status" value="1"/>
</dbReference>
<dbReference type="Pfam" id="PF00471">
    <property type="entry name" value="Ribosomal_L33"/>
    <property type="match status" value="1"/>
</dbReference>
<dbReference type="SUPFAM" id="SSF57829">
    <property type="entry name" value="Zn-binding ribosomal proteins"/>
    <property type="match status" value="1"/>
</dbReference>
<dbReference type="PROSITE" id="PS00582">
    <property type="entry name" value="RIBOSOMAL_L33"/>
    <property type="match status" value="1"/>
</dbReference>
<comment type="similarity">
    <text evidence="1">Belongs to the bacterial ribosomal protein bL33 family.</text>
</comment>
<sequence>MASKNREIIKLKSTESSEMYWTVKNKKKTSGRLELKKYDRKLRKHVIFKEAK</sequence>
<reference key="1">
    <citation type="journal article" date="2008" name="Genome Res.">
        <title>Chlamydia trachomatis: genome sequence analysis of lymphogranuloma venereum isolates.</title>
        <authorList>
            <person name="Thomson N.R."/>
            <person name="Holden M.T.G."/>
            <person name="Carder C."/>
            <person name="Lennard N."/>
            <person name="Lockey S.J."/>
            <person name="Marsh P."/>
            <person name="Skipp P."/>
            <person name="O'Connor C.D."/>
            <person name="Goodhead I."/>
            <person name="Norbertzcak H."/>
            <person name="Harris B."/>
            <person name="Ormond D."/>
            <person name="Rance R."/>
            <person name="Quail M.A."/>
            <person name="Parkhill J."/>
            <person name="Stephens R.S."/>
            <person name="Clarke I.N."/>
        </authorList>
    </citation>
    <scope>NUCLEOTIDE SEQUENCE [LARGE SCALE GENOMIC DNA]</scope>
    <source>
        <strain>UCH-1/proctitis</strain>
    </source>
</reference>
<keyword id="KW-0687">Ribonucleoprotein</keyword>
<keyword id="KW-0689">Ribosomal protein</keyword>
<evidence type="ECO:0000255" key="1">
    <source>
        <dbReference type="HAMAP-Rule" id="MF_00294"/>
    </source>
</evidence>
<evidence type="ECO:0000305" key="2"/>
<feature type="chain" id="PRO_0000356426" description="Large ribosomal subunit protein bL33">
    <location>
        <begin position="1"/>
        <end position="52"/>
    </location>
</feature>
<gene>
    <name evidence="1" type="primary">rpmG</name>
    <name type="ordered locus">CTLon_0401</name>
</gene>
<protein>
    <recommendedName>
        <fullName evidence="1">Large ribosomal subunit protein bL33</fullName>
    </recommendedName>
    <alternativeName>
        <fullName evidence="2">50S ribosomal protein L33</fullName>
    </alternativeName>
</protein>
<name>RL33_CHLTB</name>
<proteinExistence type="inferred from homology"/>